<feature type="chain" id="PRO_1000051416" description="Asparagine--tRNA ligase">
    <location>
        <begin position="1"/>
        <end position="466"/>
    </location>
</feature>
<accession>A1SW33</accession>
<protein>
    <recommendedName>
        <fullName evidence="1">Asparagine--tRNA ligase</fullName>
        <ecNumber evidence="1">6.1.1.22</ecNumber>
    </recommendedName>
    <alternativeName>
        <fullName evidence="1">Asparaginyl-tRNA synthetase</fullName>
        <shortName evidence="1">AsnRS</shortName>
    </alternativeName>
</protein>
<dbReference type="EC" id="6.1.1.22" evidence="1"/>
<dbReference type="EMBL" id="CP000510">
    <property type="protein sequence ID" value="ABM03698.1"/>
    <property type="molecule type" value="Genomic_DNA"/>
</dbReference>
<dbReference type="RefSeq" id="WP_011770258.1">
    <property type="nucleotide sequence ID" value="NC_008709.1"/>
</dbReference>
<dbReference type="SMR" id="A1SW33"/>
<dbReference type="STRING" id="357804.Ping_1926"/>
<dbReference type="KEGG" id="pin:Ping_1926"/>
<dbReference type="eggNOG" id="COG0017">
    <property type="taxonomic scope" value="Bacteria"/>
</dbReference>
<dbReference type="HOGENOM" id="CLU_004553_2_0_6"/>
<dbReference type="OrthoDB" id="9762036at2"/>
<dbReference type="Proteomes" id="UP000000639">
    <property type="component" value="Chromosome"/>
</dbReference>
<dbReference type="GO" id="GO:0005737">
    <property type="term" value="C:cytoplasm"/>
    <property type="evidence" value="ECO:0007669"/>
    <property type="project" value="UniProtKB-SubCell"/>
</dbReference>
<dbReference type="GO" id="GO:0004816">
    <property type="term" value="F:asparagine-tRNA ligase activity"/>
    <property type="evidence" value="ECO:0007669"/>
    <property type="project" value="UniProtKB-UniRule"/>
</dbReference>
<dbReference type="GO" id="GO:0005524">
    <property type="term" value="F:ATP binding"/>
    <property type="evidence" value="ECO:0007669"/>
    <property type="project" value="UniProtKB-UniRule"/>
</dbReference>
<dbReference type="GO" id="GO:0003676">
    <property type="term" value="F:nucleic acid binding"/>
    <property type="evidence" value="ECO:0007669"/>
    <property type="project" value="InterPro"/>
</dbReference>
<dbReference type="GO" id="GO:0006421">
    <property type="term" value="P:asparaginyl-tRNA aminoacylation"/>
    <property type="evidence" value="ECO:0007669"/>
    <property type="project" value="UniProtKB-UniRule"/>
</dbReference>
<dbReference type="CDD" id="cd00776">
    <property type="entry name" value="AsxRS_core"/>
    <property type="match status" value="1"/>
</dbReference>
<dbReference type="CDD" id="cd04318">
    <property type="entry name" value="EcAsnRS_like_N"/>
    <property type="match status" value="1"/>
</dbReference>
<dbReference type="FunFam" id="3.30.930.10:FF:000016">
    <property type="entry name" value="Asparagine--tRNA ligase"/>
    <property type="match status" value="1"/>
</dbReference>
<dbReference type="Gene3D" id="3.30.930.10">
    <property type="entry name" value="Bira Bifunctional Protein, Domain 2"/>
    <property type="match status" value="1"/>
</dbReference>
<dbReference type="Gene3D" id="2.40.50.140">
    <property type="entry name" value="Nucleic acid-binding proteins"/>
    <property type="match status" value="1"/>
</dbReference>
<dbReference type="HAMAP" id="MF_00534">
    <property type="entry name" value="Asn_tRNA_synth"/>
    <property type="match status" value="1"/>
</dbReference>
<dbReference type="InterPro" id="IPR004364">
    <property type="entry name" value="Aa-tRNA-synt_II"/>
</dbReference>
<dbReference type="InterPro" id="IPR006195">
    <property type="entry name" value="aa-tRNA-synth_II"/>
</dbReference>
<dbReference type="InterPro" id="IPR045864">
    <property type="entry name" value="aa-tRNA-synth_II/BPL/LPL"/>
</dbReference>
<dbReference type="InterPro" id="IPR004522">
    <property type="entry name" value="Asn-tRNA-ligase"/>
</dbReference>
<dbReference type="InterPro" id="IPR002312">
    <property type="entry name" value="Asp/Asn-tRNA-synth_IIb"/>
</dbReference>
<dbReference type="InterPro" id="IPR012340">
    <property type="entry name" value="NA-bd_OB-fold"/>
</dbReference>
<dbReference type="InterPro" id="IPR004365">
    <property type="entry name" value="NA-bd_OB_tRNA"/>
</dbReference>
<dbReference type="NCBIfam" id="TIGR00457">
    <property type="entry name" value="asnS"/>
    <property type="match status" value="1"/>
</dbReference>
<dbReference type="NCBIfam" id="NF003037">
    <property type="entry name" value="PRK03932.1"/>
    <property type="match status" value="1"/>
</dbReference>
<dbReference type="PANTHER" id="PTHR22594:SF34">
    <property type="entry name" value="ASPARAGINE--TRNA LIGASE, MITOCHONDRIAL-RELATED"/>
    <property type="match status" value="1"/>
</dbReference>
<dbReference type="PANTHER" id="PTHR22594">
    <property type="entry name" value="ASPARTYL/LYSYL-TRNA SYNTHETASE"/>
    <property type="match status" value="1"/>
</dbReference>
<dbReference type="Pfam" id="PF00152">
    <property type="entry name" value="tRNA-synt_2"/>
    <property type="match status" value="1"/>
</dbReference>
<dbReference type="Pfam" id="PF01336">
    <property type="entry name" value="tRNA_anti-codon"/>
    <property type="match status" value="1"/>
</dbReference>
<dbReference type="PRINTS" id="PR01042">
    <property type="entry name" value="TRNASYNTHASP"/>
</dbReference>
<dbReference type="SUPFAM" id="SSF55681">
    <property type="entry name" value="Class II aaRS and biotin synthetases"/>
    <property type="match status" value="1"/>
</dbReference>
<dbReference type="SUPFAM" id="SSF50249">
    <property type="entry name" value="Nucleic acid-binding proteins"/>
    <property type="match status" value="1"/>
</dbReference>
<dbReference type="PROSITE" id="PS50862">
    <property type="entry name" value="AA_TRNA_LIGASE_II"/>
    <property type="match status" value="1"/>
</dbReference>
<keyword id="KW-0030">Aminoacyl-tRNA synthetase</keyword>
<keyword id="KW-0067">ATP-binding</keyword>
<keyword id="KW-0963">Cytoplasm</keyword>
<keyword id="KW-0436">Ligase</keyword>
<keyword id="KW-0547">Nucleotide-binding</keyword>
<keyword id="KW-0648">Protein biosynthesis</keyword>
<keyword id="KW-1185">Reference proteome</keyword>
<sequence length="466" mass="52189">MSKTAIVEIFNSKFPIGTEVTVQGWIRTRRDSKAGISFLAIYDGSCFDPIQAVVPAALENYSDEVLNLTAGCSVQVTGELVESPGKGQQFEIQATQVEVLGFVQDPDTYPMSAKRHSIEYMREHAHLRARTNMFGAVTRVRNCLSHAMHNFFYEKGFNWISTPIITGSDAEGAGEMFRVSTLDLENLPRNDTGAIDYKKDFFGKETFLTVSGQLNAETYACALSKVYTFGPTFRAENSHTTRHLAEFWMVEPEIAFADLADAAQLAEDMLKYVFNAVLTERADDMAFFAQRVDKEAITRLEKIVSSEFVRMDYTDAIEILQNCGKEFEFPVAWGVDLQSEHERYLAEVHVGAPVILQNYPKDIKAFYMKLNADGKTVAAMDVLAPGIGEIIGGSQREEDLVALDKRFDEMGINKEDYSWYRDLRKYGTVPHAGFGLGFERLVSYVTGVQNIRDVIAFPRAPGSADF</sequence>
<proteinExistence type="inferred from homology"/>
<name>SYN_PSYIN</name>
<reference key="1">
    <citation type="journal article" date="2008" name="BMC Genomics">
        <title>Genomics of an extreme psychrophile, Psychromonas ingrahamii.</title>
        <authorList>
            <person name="Riley M."/>
            <person name="Staley J.T."/>
            <person name="Danchin A."/>
            <person name="Wang T.Z."/>
            <person name="Brettin T.S."/>
            <person name="Hauser L.J."/>
            <person name="Land M.L."/>
            <person name="Thompson L.S."/>
        </authorList>
    </citation>
    <scope>NUCLEOTIDE SEQUENCE [LARGE SCALE GENOMIC DNA]</scope>
    <source>
        <strain>DSM 17664 / CCUG 51855 / 37</strain>
    </source>
</reference>
<evidence type="ECO:0000255" key="1">
    <source>
        <dbReference type="HAMAP-Rule" id="MF_00534"/>
    </source>
</evidence>
<organism>
    <name type="scientific">Psychromonas ingrahamii (strain DSM 17664 / CCUG 51855 / 37)</name>
    <dbReference type="NCBI Taxonomy" id="357804"/>
    <lineage>
        <taxon>Bacteria</taxon>
        <taxon>Pseudomonadati</taxon>
        <taxon>Pseudomonadota</taxon>
        <taxon>Gammaproteobacteria</taxon>
        <taxon>Alteromonadales</taxon>
        <taxon>Psychromonadaceae</taxon>
        <taxon>Psychromonas</taxon>
    </lineage>
</organism>
<gene>
    <name evidence="1" type="primary">asnS</name>
    <name type="ordered locus">Ping_1926</name>
</gene>
<comment type="catalytic activity">
    <reaction evidence="1">
        <text>tRNA(Asn) + L-asparagine + ATP = L-asparaginyl-tRNA(Asn) + AMP + diphosphate + H(+)</text>
        <dbReference type="Rhea" id="RHEA:11180"/>
        <dbReference type="Rhea" id="RHEA-COMP:9659"/>
        <dbReference type="Rhea" id="RHEA-COMP:9674"/>
        <dbReference type="ChEBI" id="CHEBI:15378"/>
        <dbReference type="ChEBI" id="CHEBI:30616"/>
        <dbReference type="ChEBI" id="CHEBI:33019"/>
        <dbReference type="ChEBI" id="CHEBI:58048"/>
        <dbReference type="ChEBI" id="CHEBI:78442"/>
        <dbReference type="ChEBI" id="CHEBI:78515"/>
        <dbReference type="ChEBI" id="CHEBI:456215"/>
        <dbReference type="EC" id="6.1.1.22"/>
    </reaction>
</comment>
<comment type="subunit">
    <text evidence="1">Homodimer.</text>
</comment>
<comment type="subcellular location">
    <subcellularLocation>
        <location evidence="1">Cytoplasm</location>
    </subcellularLocation>
</comment>
<comment type="similarity">
    <text evidence="1">Belongs to the class-II aminoacyl-tRNA synthetase family.</text>
</comment>